<reference key="1">
    <citation type="submission" date="2008-08" db="EMBL/GenBank/DDBJ databases">
        <title>The complete genome sequence of Thermodesulfovibrio yellowstonii strain ATCC 51303 / DSM 11347 / YP87.</title>
        <authorList>
            <person name="Dodson R.J."/>
            <person name="Durkin A.S."/>
            <person name="Wu M."/>
            <person name="Eisen J."/>
            <person name="Sutton G."/>
        </authorList>
    </citation>
    <scope>NUCLEOTIDE SEQUENCE [LARGE SCALE GENOMIC DNA]</scope>
    <source>
        <strain>ATCC 51303 / DSM 11347 / YP87</strain>
    </source>
</reference>
<gene>
    <name evidence="1" type="primary">mutS</name>
    <name type="ordered locus">THEYE_A0706</name>
</gene>
<evidence type="ECO:0000255" key="1">
    <source>
        <dbReference type="HAMAP-Rule" id="MF_00096"/>
    </source>
</evidence>
<feature type="chain" id="PRO_1000093652" description="DNA mismatch repair protein MutS">
    <location>
        <begin position="1"/>
        <end position="852"/>
    </location>
</feature>
<feature type="binding site" evidence="1">
    <location>
        <begin position="615"/>
        <end position="622"/>
    </location>
    <ligand>
        <name>ATP</name>
        <dbReference type="ChEBI" id="CHEBI:30616"/>
    </ligand>
</feature>
<proteinExistence type="inferred from homology"/>
<dbReference type="EMBL" id="CP001147">
    <property type="protein sequence ID" value="ACI20467.1"/>
    <property type="molecule type" value="Genomic_DNA"/>
</dbReference>
<dbReference type="RefSeq" id="WP_012545203.1">
    <property type="nucleotide sequence ID" value="NC_011296.1"/>
</dbReference>
<dbReference type="RefSeq" id="YP_002248548.1">
    <property type="nucleotide sequence ID" value="NC_011296.1"/>
</dbReference>
<dbReference type="SMR" id="B5YJY3"/>
<dbReference type="FunCoup" id="B5YJY3">
    <property type="interactions" value="361"/>
</dbReference>
<dbReference type="STRING" id="289376.THEYE_A0706"/>
<dbReference type="EnsemblBacteria" id="ACI20467">
    <property type="protein sequence ID" value="ACI20467"/>
    <property type="gene ID" value="THEYE_A0706"/>
</dbReference>
<dbReference type="KEGG" id="tye:THEYE_A0706"/>
<dbReference type="PATRIC" id="fig|289376.4.peg.698"/>
<dbReference type="eggNOG" id="COG0249">
    <property type="taxonomic scope" value="Bacteria"/>
</dbReference>
<dbReference type="HOGENOM" id="CLU_002472_4_0_0"/>
<dbReference type="InParanoid" id="B5YJY3"/>
<dbReference type="OrthoDB" id="9802448at2"/>
<dbReference type="Proteomes" id="UP000000718">
    <property type="component" value="Chromosome"/>
</dbReference>
<dbReference type="GO" id="GO:0005829">
    <property type="term" value="C:cytosol"/>
    <property type="evidence" value="ECO:0000318"/>
    <property type="project" value="GO_Central"/>
</dbReference>
<dbReference type="GO" id="GO:0005524">
    <property type="term" value="F:ATP binding"/>
    <property type="evidence" value="ECO:0007669"/>
    <property type="project" value="UniProtKB-UniRule"/>
</dbReference>
<dbReference type="GO" id="GO:0140664">
    <property type="term" value="F:ATP-dependent DNA damage sensor activity"/>
    <property type="evidence" value="ECO:0007669"/>
    <property type="project" value="InterPro"/>
</dbReference>
<dbReference type="GO" id="GO:0003684">
    <property type="term" value="F:damaged DNA binding"/>
    <property type="evidence" value="ECO:0007669"/>
    <property type="project" value="UniProtKB-UniRule"/>
</dbReference>
<dbReference type="GO" id="GO:0030983">
    <property type="term" value="F:mismatched DNA binding"/>
    <property type="evidence" value="ECO:0000318"/>
    <property type="project" value="GO_Central"/>
</dbReference>
<dbReference type="GO" id="GO:0006298">
    <property type="term" value="P:mismatch repair"/>
    <property type="evidence" value="ECO:0000318"/>
    <property type="project" value="GO_Central"/>
</dbReference>
<dbReference type="CDD" id="cd03284">
    <property type="entry name" value="ABC_MutS1"/>
    <property type="match status" value="1"/>
</dbReference>
<dbReference type="FunFam" id="1.10.1420.10:FF:000007">
    <property type="entry name" value="DNA mismatch repair protein MutS"/>
    <property type="match status" value="1"/>
</dbReference>
<dbReference type="FunFam" id="3.40.1170.10:FF:000001">
    <property type="entry name" value="DNA mismatch repair protein MutS"/>
    <property type="match status" value="1"/>
</dbReference>
<dbReference type="FunFam" id="3.40.50.300:FF:002349">
    <property type="entry name" value="DNA mismatch repair protein MutS"/>
    <property type="match status" value="1"/>
</dbReference>
<dbReference type="Gene3D" id="1.10.1420.10">
    <property type="match status" value="2"/>
</dbReference>
<dbReference type="Gene3D" id="3.40.1170.10">
    <property type="entry name" value="DNA repair protein MutS, domain I"/>
    <property type="match status" value="1"/>
</dbReference>
<dbReference type="Gene3D" id="3.30.420.110">
    <property type="entry name" value="MutS, connector domain"/>
    <property type="match status" value="1"/>
</dbReference>
<dbReference type="Gene3D" id="3.40.50.300">
    <property type="entry name" value="P-loop containing nucleotide triphosphate hydrolases"/>
    <property type="match status" value="1"/>
</dbReference>
<dbReference type="HAMAP" id="MF_00096">
    <property type="entry name" value="MutS"/>
    <property type="match status" value="1"/>
</dbReference>
<dbReference type="InterPro" id="IPR005748">
    <property type="entry name" value="DNA_mismatch_repair_MutS"/>
</dbReference>
<dbReference type="InterPro" id="IPR007695">
    <property type="entry name" value="DNA_mismatch_repair_MutS-lik_N"/>
</dbReference>
<dbReference type="InterPro" id="IPR017261">
    <property type="entry name" value="DNA_mismatch_repair_MutS/MSH"/>
</dbReference>
<dbReference type="InterPro" id="IPR000432">
    <property type="entry name" value="DNA_mismatch_repair_MutS_C"/>
</dbReference>
<dbReference type="InterPro" id="IPR007861">
    <property type="entry name" value="DNA_mismatch_repair_MutS_clamp"/>
</dbReference>
<dbReference type="InterPro" id="IPR007696">
    <property type="entry name" value="DNA_mismatch_repair_MutS_core"/>
</dbReference>
<dbReference type="InterPro" id="IPR016151">
    <property type="entry name" value="DNA_mismatch_repair_MutS_N"/>
</dbReference>
<dbReference type="InterPro" id="IPR036187">
    <property type="entry name" value="DNA_mismatch_repair_MutS_sf"/>
</dbReference>
<dbReference type="InterPro" id="IPR007860">
    <property type="entry name" value="DNA_mmatch_repair_MutS_con_dom"/>
</dbReference>
<dbReference type="InterPro" id="IPR045076">
    <property type="entry name" value="MutS"/>
</dbReference>
<dbReference type="InterPro" id="IPR036678">
    <property type="entry name" value="MutS_con_dom_sf"/>
</dbReference>
<dbReference type="InterPro" id="IPR027417">
    <property type="entry name" value="P-loop_NTPase"/>
</dbReference>
<dbReference type="NCBIfam" id="TIGR01070">
    <property type="entry name" value="mutS1"/>
    <property type="match status" value="1"/>
</dbReference>
<dbReference type="NCBIfam" id="NF003810">
    <property type="entry name" value="PRK05399.1"/>
    <property type="match status" value="1"/>
</dbReference>
<dbReference type="PANTHER" id="PTHR11361:SF34">
    <property type="entry name" value="DNA MISMATCH REPAIR PROTEIN MSH1, MITOCHONDRIAL"/>
    <property type="match status" value="1"/>
</dbReference>
<dbReference type="PANTHER" id="PTHR11361">
    <property type="entry name" value="DNA MISMATCH REPAIR PROTEIN MUTS FAMILY MEMBER"/>
    <property type="match status" value="1"/>
</dbReference>
<dbReference type="Pfam" id="PF01624">
    <property type="entry name" value="MutS_I"/>
    <property type="match status" value="1"/>
</dbReference>
<dbReference type="Pfam" id="PF05188">
    <property type="entry name" value="MutS_II"/>
    <property type="match status" value="1"/>
</dbReference>
<dbReference type="Pfam" id="PF05192">
    <property type="entry name" value="MutS_III"/>
    <property type="match status" value="1"/>
</dbReference>
<dbReference type="Pfam" id="PF05190">
    <property type="entry name" value="MutS_IV"/>
    <property type="match status" value="1"/>
</dbReference>
<dbReference type="Pfam" id="PF00488">
    <property type="entry name" value="MutS_V"/>
    <property type="match status" value="1"/>
</dbReference>
<dbReference type="PIRSF" id="PIRSF037677">
    <property type="entry name" value="DNA_mis_repair_Msh6"/>
    <property type="match status" value="1"/>
</dbReference>
<dbReference type="SMART" id="SM00534">
    <property type="entry name" value="MUTSac"/>
    <property type="match status" value="1"/>
</dbReference>
<dbReference type="SMART" id="SM00533">
    <property type="entry name" value="MUTSd"/>
    <property type="match status" value="1"/>
</dbReference>
<dbReference type="SUPFAM" id="SSF55271">
    <property type="entry name" value="DNA repair protein MutS, domain I"/>
    <property type="match status" value="1"/>
</dbReference>
<dbReference type="SUPFAM" id="SSF53150">
    <property type="entry name" value="DNA repair protein MutS, domain II"/>
    <property type="match status" value="1"/>
</dbReference>
<dbReference type="SUPFAM" id="SSF48334">
    <property type="entry name" value="DNA repair protein MutS, domain III"/>
    <property type="match status" value="1"/>
</dbReference>
<dbReference type="SUPFAM" id="SSF52540">
    <property type="entry name" value="P-loop containing nucleoside triphosphate hydrolases"/>
    <property type="match status" value="1"/>
</dbReference>
<dbReference type="PROSITE" id="PS00486">
    <property type="entry name" value="DNA_MISMATCH_REPAIR_2"/>
    <property type="match status" value="1"/>
</dbReference>
<comment type="function">
    <text evidence="1">This protein is involved in the repair of mismatches in DNA. It is possible that it carries out the mismatch recognition step. This protein has a weak ATPase activity.</text>
</comment>
<comment type="similarity">
    <text evidence="1">Belongs to the DNA mismatch repair MutS family.</text>
</comment>
<accession>B5YJY3</accession>
<keyword id="KW-0067">ATP-binding</keyword>
<keyword id="KW-0227">DNA damage</keyword>
<keyword id="KW-0234">DNA repair</keyword>
<keyword id="KW-0238">DNA-binding</keyword>
<keyword id="KW-0547">Nucleotide-binding</keyword>
<keyword id="KW-1185">Reference proteome</keyword>
<organism>
    <name type="scientific">Thermodesulfovibrio yellowstonii (strain ATCC 51303 / DSM 11347 / YP87)</name>
    <dbReference type="NCBI Taxonomy" id="289376"/>
    <lineage>
        <taxon>Bacteria</taxon>
        <taxon>Pseudomonadati</taxon>
        <taxon>Nitrospirota</taxon>
        <taxon>Thermodesulfovibrionia</taxon>
        <taxon>Thermodesulfovibrionales</taxon>
        <taxon>Thermodesulfovibrionaceae</taxon>
        <taxon>Thermodesulfovibrio</taxon>
    </lineage>
</organism>
<name>MUTS_THEYD</name>
<sequence length="852" mass="97306">MEVSQEELTPLMRQYLRVKEQYKDAIVFFRLGDFYEMFGEDAVIASKILGITLTSRDKSKEKAIPMCGIPYFSADSYIEKLLREGYKVAICEQIGDPKTSKGIVEREVIKVLTPGTYLPEGVRENIYIMSIYPSKGKIGIALADITTGQFFLYETDKNITDEIERFEPKEILIPASFEDSLKFEISSYNKTFIEDWKFDYLLAYKTLLEHFKVASLKSYGAEEFSNAISAGGALLKYLEENKQQTEFKGIKILNLSEFMLLDASTKKNLEIFVSLDGSREGSLIWVLDETLTPMGARFLKNTLSCPLLNISEIEKRFDGIEAFCGDYLLREKLEKILKDFPDIERIALKIKGKSINPKELNSLKNALKRIPELREVLRNKTEILNSLYNSLYELNELVTKIENALTENPPPVITEGGIFRDGYNSTIDELRALRTESKKYILNMEAEERKKTGINSLKIGYNRVFGYYIEVTKPNLHLVPSHYIRKQTLANAERFITEELKELELKIMSAEEKLKILEQELFIELVNSILPFTDKILNNGETIGFIDFLLSLAKVASKYNYVRPEINEEDIIEIKDGRHPVIERLIQLGKLYEGRFIPNDLLIGPADQRIIILTGPNMAGKSTYMRQNALIVLMAQIGSFVPAKYAKIGIVDRIFTRIGASDYLAKGQSTFMVEMIETANILNNATPKSFIILDEVGRGTSTFDGISIAWSVVEYIAEKIKARTLFATHYHELTDLAFNLDCIKNFTVVVKEWGDEIIFLRKIQEGGADKSYGIQVARLAGLPLEILNRAREILHRLEKKEFQVFPIRARQLDLFFQGDPIKAELSKIDIDSLNPQKALKKLKELKEMLKND</sequence>
<protein>
    <recommendedName>
        <fullName evidence="1">DNA mismatch repair protein MutS</fullName>
    </recommendedName>
</protein>